<comment type="function">
    <text evidence="2">Component of the ubiquinol-cytochrome c reductase complex (complex III or cytochrome b-c1 complex) that is part of the mitochondrial respiratory chain. The b-c1 complex mediates electron transfer from ubiquinol to cytochrome c. Contributes to the generation of a proton gradient across the mitochondrial membrane that is then used for ATP synthesis.</text>
</comment>
<comment type="cofactor">
    <cofactor evidence="2">
        <name>heme b</name>
        <dbReference type="ChEBI" id="CHEBI:60344"/>
    </cofactor>
    <text evidence="2">Binds 2 heme b groups non-covalently.</text>
</comment>
<comment type="subunit">
    <text evidence="2">The cytochrome bc1 complex contains 11 subunits: 3 respiratory subunits (MT-CYB, CYC1 and UQCRFS1), 2 core proteins (UQCRC1 and UQCRC2) and 6 low-molecular weight proteins (UQCRH/QCR6, UQCRB/QCR7, UQCRQ/QCR8, UQCR10/QCR9, UQCR11/QCR10 and a cleavage product of UQCRFS1). This cytochrome bc1 complex then forms a dimer.</text>
</comment>
<comment type="subcellular location">
    <subcellularLocation>
        <location evidence="2">Mitochondrion inner membrane</location>
        <topology evidence="2">Multi-pass membrane protein</topology>
    </subcellularLocation>
</comment>
<comment type="miscellaneous">
    <text evidence="1">Heme 1 (or BL or b562) is low-potential and absorbs at about 562 nm, and heme 2 (or BH or b566) is high-potential and absorbs at about 566 nm.</text>
</comment>
<comment type="similarity">
    <text evidence="3 4">Belongs to the cytochrome b family.</text>
</comment>
<comment type="caution">
    <text evidence="2">The full-length protein contains only eight transmembrane helices, not nine as predicted by bioinformatics tools.</text>
</comment>
<dbReference type="EMBL" id="AF153888">
    <property type="protein sequence ID" value="AAK26676.1"/>
    <property type="molecule type" value="Genomic_DNA"/>
</dbReference>
<dbReference type="SMR" id="Q9B5R7"/>
<dbReference type="GO" id="GO:0005743">
    <property type="term" value="C:mitochondrial inner membrane"/>
    <property type="evidence" value="ECO:0007669"/>
    <property type="project" value="UniProtKB-SubCell"/>
</dbReference>
<dbReference type="GO" id="GO:0045275">
    <property type="term" value="C:respiratory chain complex III"/>
    <property type="evidence" value="ECO:0007669"/>
    <property type="project" value="InterPro"/>
</dbReference>
<dbReference type="GO" id="GO:0046872">
    <property type="term" value="F:metal ion binding"/>
    <property type="evidence" value="ECO:0007669"/>
    <property type="project" value="UniProtKB-KW"/>
</dbReference>
<dbReference type="GO" id="GO:0008121">
    <property type="term" value="F:ubiquinol-cytochrome-c reductase activity"/>
    <property type="evidence" value="ECO:0007669"/>
    <property type="project" value="InterPro"/>
</dbReference>
<dbReference type="GO" id="GO:0006122">
    <property type="term" value="P:mitochondrial electron transport, ubiquinol to cytochrome c"/>
    <property type="evidence" value="ECO:0007669"/>
    <property type="project" value="TreeGrafter"/>
</dbReference>
<dbReference type="CDD" id="cd00290">
    <property type="entry name" value="cytochrome_b_C"/>
    <property type="match status" value="1"/>
</dbReference>
<dbReference type="CDD" id="cd00284">
    <property type="entry name" value="Cytochrome_b_N"/>
    <property type="match status" value="1"/>
</dbReference>
<dbReference type="FunFam" id="1.20.810.10:FF:000002">
    <property type="entry name" value="Cytochrome b"/>
    <property type="match status" value="1"/>
</dbReference>
<dbReference type="Gene3D" id="1.20.810.10">
    <property type="entry name" value="Cytochrome Bc1 Complex, Chain C"/>
    <property type="match status" value="1"/>
</dbReference>
<dbReference type="InterPro" id="IPR005798">
    <property type="entry name" value="Cyt_b/b6_C"/>
</dbReference>
<dbReference type="InterPro" id="IPR036150">
    <property type="entry name" value="Cyt_b/b6_C_sf"/>
</dbReference>
<dbReference type="InterPro" id="IPR005797">
    <property type="entry name" value="Cyt_b/b6_N"/>
</dbReference>
<dbReference type="InterPro" id="IPR027387">
    <property type="entry name" value="Cytb/b6-like_sf"/>
</dbReference>
<dbReference type="InterPro" id="IPR030689">
    <property type="entry name" value="Cytochrome_b"/>
</dbReference>
<dbReference type="InterPro" id="IPR048260">
    <property type="entry name" value="Cytochrome_b_C_euk/bac"/>
</dbReference>
<dbReference type="InterPro" id="IPR048259">
    <property type="entry name" value="Cytochrome_b_N_euk/bac"/>
</dbReference>
<dbReference type="InterPro" id="IPR016174">
    <property type="entry name" value="Di-haem_cyt_TM"/>
</dbReference>
<dbReference type="PANTHER" id="PTHR19271">
    <property type="entry name" value="CYTOCHROME B"/>
    <property type="match status" value="1"/>
</dbReference>
<dbReference type="PANTHER" id="PTHR19271:SF16">
    <property type="entry name" value="CYTOCHROME B"/>
    <property type="match status" value="1"/>
</dbReference>
<dbReference type="Pfam" id="PF00032">
    <property type="entry name" value="Cytochrom_B_C"/>
    <property type="match status" value="1"/>
</dbReference>
<dbReference type="Pfam" id="PF00033">
    <property type="entry name" value="Cytochrome_B"/>
    <property type="match status" value="1"/>
</dbReference>
<dbReference type="PIRSF" id="PIRSF038885">
    <property type="entry name" value="COB"/>
    <property type="match status" value="1"/>
</dbReference>
<dbReference type="SUPFAM" id="SSF81648">
    <property type="entry name" value="a domain/subunit of cytochrome bc1 complex (Ubiquinol-cytochrome c reductase)"/>
    <property type="match status" value="1"/>
</dbReference>
<dbReference type="SUPFAM" id="SSF81342">
    <property type="entry name" value="Transmembrane di-heme cytochromes"/>
    <property type="match status" value="1"/>
</dbReference>
<dbReference type="PROSITE" id="PS51003">
    <property type="entry name" value="CYTB_CTER"/>
    <property type="match status" value="1"/>
</dbReference>
<dbReference type="PROSITE" id="PS51002">
    <property type="entry name" value="CYTB_NTER"/>
    <property type="match status" value="1"/>
</dbReference>
<evidence type="ECO:0000250" key="1"/>
<evidence type="ECO:0000250" key="2">
    <source>
        <dbReference type="UniProtKB" id="P00157"/>
    </source>
</evidence>
<evidence type="ECO:0000255" key="3">
    <source>
        <dbReference type="PROSITE-ProRule" id="PRU00967"/>
    </source>
</evidence>
<evidence type="ECO:0000255" key="4">
    <source>
        <dbReference type="PROSITE-ProRule" id="PRU00968"/>
    </source>
</evidence>
<reference key="1">
    <citation type="journal article" date="2001" name="Mol. Phylogenet. Evol.">
        <title>Retrieval of four adaptive lineages in duiker antelope: evidence from mitochondrial DNA sequences and fluorescence in situ hybridization.</title>
        <authorList>
            <person name="van Vuuren B.J."/>
            <person name="Robinson T.J."/>
        </authorList>
    </citation>
    <scope>NUCLEOTIDE SEQUENCE [GENOMIC DNA]</scope>
    <source>
        <tissue>Blood</tissue>
    </source>
</reference>
<sequence>MTNIRKTHPLMKIVNSAFIDLPAPSNISSWWNFGSLLGICLILQILTGLFLAMHYTADTTTAFSSVTHICRDVNYGWIIRYMHANGASMFFICLFMHVGRGLYYGSYTYTETWNIGVILLFATMATAFMGYVLPWGQMSFWGATVITNLLSAIPYIGTSLVEWIWGGFSVDKATLTRFFAFHFIFPFIIAALAMVHLLFLHETGSNNPTGISSDADKIPFHPYYTIKDILGALLLILALMILVLFSPDLLGDPDNYTPANPLNTPPHIKPEWYFLFAYAILRSIPNKLGGVLALVLSILILVLMPLLHTSKQRSMMFRPISQCLFWILVADLLTLTWIGGQPVEHPYIIIGQLASIMYFLLILVLMPMASTIENNLLKW</sequence>
<gene>
    <name type="primary">MT-CYB</name>
    <name type="synonym">COB</name>
    <name type="synonym">CYTB</name>
    <name type="synonym">MTCYB</name>
</gene>
<name>CYB_CEPJE</name>
<proteinExistence type="inferred from homology"/>
<feature type="chain" id="PRO_0000254671" description="Cytochrome b">
    <location>
        <begin position="1"/>
        <end position="379"/>
    </location>
</feature>
<feature type="transmembrane region" description="Helical" evidence="2">
    <location>
        <begin position="33"/>
        <end position="53"/>
    </location>
</feature>
<feature type="transmembrane region" description="Helical" evidence="2">
    <location>
        <begin position="77"/>
        <end position="98"/>
    </location>
</feature>
<feature type="transmembrane region" description="Helical" evidence="2">
    <location>
        <begin position="113"/>
        <end position="133"/>
    </location>
</feature>
<feature type="transmembrane region" description="Helical" evidence="2">
    <location>
        <begin position="178"/>
        <end position="198"/>
    </location>
</feature>
<feature type="transmembrane region" description="Helical" evidence="2">
    <location>
        <begin position="226"/>
        <end position="246"/>
    </location>
</feature>
<feature type="transmembrane region" description="Helical" evidence="2">
    <location>
        <begin position="288"/>
        <end position="308"/>
    </location>
</feature>
<feature type="transmembrane region" description="Helical" evidence="2">
    <location>
        <begin position="320"/>
        <end position="340"/>
    </location>
</feature>
<feature type="transmembrane region" description="Helical" evidence="2">
    <location>
        <begin position="347"/>
        <end position="367"/>
    </location>
</feature>
<feature type="binding site" description="axial binding residue" evidence="2">
    <location>
        <position position="83"/>
    </location>
    <ligand>
        <name>heme b</name>
        <dbReference type="ChEBI" id="CHEBI:60344"/>
        <label>b562</label>
    </ligand>
    <ligandPart>
        <name>Fe</name>
        <dbReference type="ChEBI" id="CHEBI:18248"/>
    </ligandPart>
</feature>
<feature type="binding site" description="axial binding residue" evidence="2">
    <location>
        <position position="97"/>
    </location>
    <ligand>
        <name>heme b</name>
        <dbReference type="ChEBI" id="CHEBI:60344"/>
        <label>b566</label>
    </ligand>
    <ligandPart>
        <name>Fe</name>
        <dbReference type="ChEBI" id="CHEBI:18248"/>
    </ligandPart>
</feature>
<feature type="binding site" description="axial binding residue" evidence="2">
    <location>
        <position position="182"/>
    </location>
    <ligand>
        <name>heme b</name>
        <dbReference type="ChEBI" id="CHEBI:60344"/>
        <label>b562</label>
    </ligand>
    <ligandPart>
        <name>Fe</name>
        <dbReference type="ChEBI" id="CHEBI:18248"/>
    </ligandPart>
</feature>
<feature type="binding site" description="axial binding residue" evidence="2">
    <location>
        <position position="196"/>
    </location>
    <ligand>
        <name>heme b</name>
        <dbReference type="ChEBI" id="CHEBI:60344"/>
        <label>b566</label>
    </ligand>
    <ligandPart>
        <name>Fe</name>
        <dbReference type="ChEBI" id="CHEBI:18248"/>
    </ligandPart>
</feature>
<feature type="binding site" evidence="2">
    <location>
        <position position="201"/>
    </location>
    <ligand>
        <name>a ubiquinone</name>
        <dbReference type="ChEBI" id="CHEBI:16389"/>
    </ligand>
</feature>
<accession>Q9B5R7</accession>
<keyword id="KW-0249">Electron transport</keyword>
<keyword id="KW-0349">Heme</keyword>
<keyword id="KW-0408">Iron</keyword>
<keyword id="KW-0472">Membrane</keyword>
<keyword id="KW-0479">Metal-binding</keyword>
<keyword id="KW-0496">Mitochondrion</keyword>
<keyword id="KW-0999">Mitochondrion inner membrane</keyword>
<keyword id="KW-0679">Respiratory chain</keyword>
<keyword id="KW-0812">Transmembrane</keyword>
<keyword id="KW-1133">Transmembrane helix</keyword>
<keyword id="KW-0813">Transport</keyword>
<keyword id="KW-0830">Ubiquinone</keyword>
<organism>
    <name type="scientific">Cephalophus jentinki</name>
    <name type="common">Jentink's duiker</name>
    <dbReference type="NCBI Taxonomy" id="129225"/>
    <lineage>
        <taxon>Eukaryota</taxon>
        <taxon>Metazoa</taxon>
        <taxon>Chordata</taxon>
        <taxon>Craniata</taxon>
        <taxon>Vertebrata</taxon>
        <taxon>Euteleostomi</taxon>
        <taxon>Mammalia</taxon>
        <taxon>Eutheria</taxon>
        <taxon>Laurasiatheria</taxon>
        <taxon>Artiodactyla</taxon>
        <taxon>Ruminantia</taxon>
        <taxon>Pecora</taxon>
        <taxon>Bovidae</taxon>
        <taxon>Cephalophinae</taxon>
        <taxon>Cephalophus</taxon>
    </lineage>
</organism>
<geneLocation type="mitochondrion"/>
<protein>
    <recommendedName>
        <fullName>Cytochrome b</fullName>
    </recommendedName>
    <alternativeName>
        <fullName>Complex III subunit 3</fullName>
    </alternativeName>
    <alternativeName>
        <fullName>Complex III subunit III</fullName>
    </alternativeName>
    <alternativeName>
        <fullName>Cytochrome b-c1 complex subunit 3</fullName>
    </alternativeName>
    <alternativeName>
        <fullName>Ubiquinol-cytochrome-c reductase complex cytochrome b subunit</fullName>
    </alternativeName>
</protein>